<accession>O29444</accession>
<comment type="function">
    <text evidence="1">Has nucleotide phosphatase activity towards ATP, GTP, CTP, TTP and UTP. May hydrolyze nucleoside diphosphates with lower efficiency.</text>
</comment>
<comment type="catalytic activity">
    <reaction evidence="1">
        <text>a ribonucleoside 5'-triphosphate + H2O = a ribonucleoside 5'-diphosphate + phosphate + H(+)</text>
        <dbReference type="Rhea" id="RHEA:23680"/>
        <dbReference type="ChEBI" id="CHEBI:15377"/>
        <dbReference type="ChEBI" id="CHEBI:15378"/>
        <dbReference type="ChEBI" id="CHEBI:43474"/>
        <dbReference type="ChEBI" id="CHEBI:57930"/>
        <dbReference type="ChEBI" id="CHEBI:61557"/>
        <dbReference type="EC" id="3.6.1.15"/>
    </reaction>
</comment>
<comment type="similarity">
    <text evidence="1">Belongs to the THEP1 NTPase family.</text>
</comment>
<protein>
    <recommendedName>
        <fullName evidence="1">Nucleoside-triphosphatase THEP1</fullName>
        <shortName evidence="1">NTPase THEP1</shortName>
        <ecNumber evidence="1">3.6.1.15</ecNumber>
    </recommendedName>
    <alternativeName>
        <fullName evidence="1">Nucleoside triphosphate phosphohydrolase</fullName>
    </alternativeName>
</protein>
<organism>
    <name type="scientific">Archaeoglobus fulgidus (strain ATCC 49558 / DSM 4304 / JCM 9628 / NBRC 100126 / VC-16)</name>
    <dbReference type="NCBI Taxonomy" id="224325"/>
    <lineage>
        <taxon>Archaea</taxon>
        <taxon>Methanobacteriati</taxon>
        <taxon>Methanobacteriota</taxon>
        <taxon>Archaeoglobi</taxon>
        <taxon>Archaeoglobales</taxon>
        <taxon>Archaeoglobaceae</taxon>
        <taxon>Archaeoglobus</taxon>
    </lineage>
</organism>
<dbReference type="EC" id="3.6.1.15" evidence="1"/>
<dbReference type="EMBL" id="AE000782">
    <property type="protein sequence ID" value="AAB90428.1"/>
    <property type="molecule type" value="Genomic_DNA"/>
</dbReference>
<dbReference type="PIR" id="F69351">
    <property type="entry name" value="F69351"/>
</dbReference>
<dbReference type="RefSeq" id="WP_010878317.1">
    <property type="nucleotide sequence ID" value="NC_000917.1"/>
</dbReference>
<dbReference type="SMR" id="O29444"/>
<dbReference type="STRING" id="224325.AF_0814"/>
<dbReference type="PaxDb" id="224325-AF_0814"/>
<dbReference type="EnsemblBacteria" id="AAB90428">
    <property type="protein sequence ID" value="AAB90428"/>
    <property type="gene ID" value="AF_0814"/>
</dbReference>
<dbReference type="GeneID" id="1484033"/>
<dbReference type="KEGG" id="afu:AF_0814"/>
<dbReference type="eggNOG" id="arCOG01034">
    <property type="taxonomic scope" value="Archaea"/>
</dbReference>
<dbReference type="HOGENOM" id="CLU_103145_1_1_2"/>
<dbReference type="OrthoDB" id="52698at2157"/>
<dbReference type="PhylomeDB" id="O29444"/>
<dbReference type="Proteomes" id="UP000002199">
    <property type="component" value="Chromosome"/>
</dbReference>
<dbReference type="GO" id="GO:0005524">
    <property type="term" value="F:ATP binding"/>
    <property type="evidence" value="ECO:0007669"/>
    <property type="project" value="UniProtKB-UniRule"/>
</dbReference>
<dbReference type="GO" id="GO:0016887">
    <property type="term" value="F:ATP hydrolysis activity"/>
    <property type="evidence" value="ECO:0007669"/>
    <property type="project" value="InterPro"/>
</dbReference>
<dbReference type="CDD" id="cd19482">
    <property type="entry name" value="RecA-like_Thep1"/>
    <property type="match status" value="1"/>
</dbReference>
<dbReference type="Gene3D" id="3.40.50.300">
    <property type="entry name" value="P-loop containing nucleotide triphosphate hydrolases"/>
    <property type="match status" value="1"/>
</dbReference>
<dbReference type="HAMAP" id="MF_00796">
    <property type="entry name" value="NTPase_1"/>
    <property type="match status" value="1"/>
</dbReference>
<dbReference type="InterPro" id="IPR003593">
    <property type="entry name" value="AAA+_ATPase"/>
</dbReference>
<dbReference type="InterPro" id="IPR004948">
    <property type="entry name" value="Nuc-triphosphatase_THEP1"/>
</dbReference>
<dbReference type="InterPro" id="IPR027417">
    <property type="entry name" value="P-loop_NTPase"/>
</dbReference>
<dbReference type="NCBIfam" id="NF010248">
    <property type="entry name" value="PRK13695.1"/>
    <property type="match status" value="1"/>
</dbReference>
<dbReference type="PANTHER" id="PTHR43146">
    <property type="entry name" value="CANCER-RELATED NUCLEOSIDE-TRIPHOSPHATASE"/>
    <property type="match status" value="1"/>
</dbReference>
<dbReference type="PANTHER" id="PTHR43146:SF1">
    <property type="entry name" value="CANCER-RELATED NUCLEOSIDE-TRIPHOSPHATASE"/>
    <property type="match status" value="1"/>
</dbReference>
<dbReference type="Pfam" id="PF03266">
    <property type="entry name" value="NTPase_1"/>
    <property type="match status" value="1"/>
</dbReference>
<dbReference type="SMART" id="SM00382">
    <property type="entry name" value="AAA"/>
    <property type="match status" value="1"/>
</dbReference>
<dbReference type="SUPFAM" id="SSF52540">
    <property type="entry name" value="P-loop containing nucleoside triphosphate hydrolases"/>
    <property type="match status" value="1"/>
</dbReference>
<gene>
    <name type="ordered locus">AF_0814</name>
</gene>
<sequence length="165" mass="18855">MKVAVTGRPGVGKTTLCLKVHESLKDKMTVGGFITKEVRRDGVRVGFKLVDLSSGNEEWLARVGEGKARVGKYAVNVEGLEEFLDSVRTDADLVIIDEVGPMELKSRKFVRFVENLMGRERLLFTIHLKSRHRLLDRIRREFKVYVIDESNRNRIAEEITRILEG</sequence>
<name>NTPTH_ARCFU</name>
<reference key="1">
    <citation type="journal article" date="1997" name="Nature">
        <title>The complete genome sequence of the hyperthermophilic, sulphate-reducing archaeon Archaeoglobus fulgidus.</title>
        <authorList>
            <person name="Klenk H.-P."/>
            <person name="Clayton R.A."/>
            <person name="Tomb J.-F."/>
            <person name="White O."/>
            <person name="Nelson K.E."/>
            <person name="Ketchum K.A."/>
            <person name="Dodson R.J."/>
            <person name="Gwinn M.L."/>
            <person name="Hickey E.K."/>
            <person name="Peterson J.D."/>
            <person name="Richardson D.L."/>
            <person name="Kerlavage A.R."/>
            <person name="Graham D.E."/>
            <person name="Kyrpides N.C."/>
            <person name="Fleischmann R.D."/>
            <person name="Quackenbush J."/>
            <person name="Lee N.H."/>
            <person name="Sutton G.G."/>
            <person name="Gill S.R."/>
            <person name="Kirkness E.F."/>
            <person name="Dougherty B.A."/>
            <person name="McKenney K."/>
            <person name="Adams M.D."/>
            <person name="Loftus B.J."/>
            <person name="Peterson S.N."/>
            <person name="Reich C.I."/>
            <person name="McNeil L.K."/>
            <person name="Badger J.H."/>
            <person name="Glodek A."/>
            <person name="Zhou L."/>
            <person name="Overbeek R."/>
            <person name="Gocayne J.D."/>
            <person name="Weidman J.F."/>
            <person name="McDonald L.A."/>
            <person name="Utterback T.R."/>
            <person name="Cotton M.D."/>
            <person name="Spriggs T."/>
            <person name="Artiach P."/>
            <person name="Kaine B.P."/>
            <person name="Sykes S.M."/>
            <person name="Sadow P.W."/>
            <person name="D'Andrea K.P."/>
            <person name="Bowman C."/>
            <person name="Fujii C."/>
            <person name="Garland S.A."/>
            <person name="Mason T.M."/>
            <person name="Olsen G.J."/>
            <person name="Fraser C.M."/>
            <person name="Smith H.O."/>
            <person name="Woese C.R."/>
            <person name="Venter J.C."/>
        </authorList>
    </citation>
    <scope>NUCLEOTIDE SEQUENCE [LARGE SCALE GENOMIC DNA]</scope>
    <source>
        <strain>ATCC 49558 / DSM 4304 / JCM 9628 / NBRC 100126 / VC-16</strain>
    </source>
</reference>
<evidence type="ECO:0000255" key="1">
    <source>
        <dbReference type="HAMAP-Rule" id="MF_00796"/>
    </source>
</evidence>
<keyword id="KW-0067">ATP-binding</keyword>
<keyword id="KW-0378">Hydrolase</keyword>
<keyword id="KW-0547">Nucleotide-binding</keyword>
<keyword id="KW-1185">Reference proteome</keyword>
<feature type="chain" id="PRO_0000146694" description="Nucleoside-triphosphatase THEP1">
    <location>
        <begin position="1"/>
        <end position="165"/>
    </location>
</feature>
<feature type="binding site" evidence="1">
    <location>
        <begin position="7"/>
        <end position="14"/>
    </location>
    <ligand>
        <name>ATP</name>
        <dbReference type="ChEBI" id="CHEBI:30616"/>
    </ligand>
</feature>
<feature type="binding site" evidence="1">
    <location>
        <begin position="93"/>
        <end position="100"/>
    </location>
    <ligand>
        <name>ATP</name>
        <dbReference type="ChEBI" id="CHEBI:30616"/>
    </ligand>
</feature>
<proteinExistence type="inferred from homology"/>